<organism>
    <name type="scientific">Legionella pneumophila subsp. pneumophila (strain Philadelphia 1 / ATCC 33152 / DSM 7513)</name>
    <dbReference type="NCBI Taxonomy" id="272624"/>
    <lineage>
        <taxon>Bacteria</taxon>
        <taxon>Pseudomonadati</taxon>
        <taxon>Pseudomonadota</taxon>
        <taxon>Gammaproteobacteria</taxon>
        <taxon>Legionellales</taxon>
        <taxon>Legionellaceae</taxon>
        <taxon>Legionella</taxon>
    </lineage>
</organism>
<sequence>MAKELTLSIIKPDAVAKSVIGEIYTRFEKAGLDIVAAKMTQLSREQAESFYDIHRARPFFKDLVDFMISGPVMIQVLKGENAVAKNREIMGATNPKEAAPGTIRADFADSIDANAVHGSDSLENAAREIAFFFEQHELCNR</sequence>
<name>NDK_LEGPH</name>
<gene>
    <name evidence="1" type="primary">ndk</name>
    <name type="ordered locus">lpg1548</name>
</gene>
<feature type="chain" id="PRO_0000136996" description="Nucleoside diphosphate kinase">
    <location>
        <begin position="1"/>
        <end position="141"/>
    </location>
</feature>
<feature type="active site" description="Pros-phosphohistidine intermediate" evidence="1">
    <location>
        <position position="117"/>
    </location>
</feature>
<feature type="binding site" evidence="1">
    <location>
        <position position="11"/>
    </location>
    <ligand>
        <name>ATP</name>
        <dbReference type="ChEBI" id="CHEBI:30616"/>
    </ligand>
</feature>
<feature type="binding site" evidence="1">
    <location>
        <position position="59"/>
    </location>
    <ligand>
        <name>ATP</name>
        <dbReference type="ChEBI" id="CHEBI:30616"/>
    </ligand>
</feature>
<feature type="binding site" evidence="1">
    <location>
        <position position="87"/>
    </location>
    <ligand>
        <name>ATP</name>
        <dbReference type="ChEBI" id="CHEBI:30616"/>
    </ligand>
</feature>
<feature type="binding site" evidence="1">
    <location>
        <position position="93"/>
    </location>
    <ligand>
        <name>ATP</name>
        <dbReference type="ChEBI" id="CHEBI:30616"/>
    </ligand>
</feature>
<feature type="binding site" evidence="1">
    <location>
        <position position="104"/>
    </location>
    <ligand>
        <name>ATP</name>
        <dbReference type="ChEBI" id="CHEBI:30616"/>
    </ligand>
</feature>
<feature type="binding site" evidence="1">
    <location>
        <position position="114"/>
    </location>
    <ligand>
        <name>ATP</name>
        <dbReference type="ChEBI" id="CHEBI:30616"/>
    </ligand>
</feature>
<comment type="function">
    <text evidence="1">Major role in the synthesis of nucleoside triphosphates other than ATP. The ATP gamma phosphate is transferred to the NDP beta phosphate via a ping-pong mechanism, using a phosphorylated active-site intermediate.</text>
</comment>
<comment type="catalytic activity">
    <reaction evidence="1">
        <text>a 2'-deoxyribonucleoside 5'-diphosphate + ATP = a 2'-deoxyribonucleoside 5'-triphosphate + ADP</text>
        <dbReference type="Rhea" id="RHEA:44640"/>
        <dbReference type="ChEBI" id="CHEBI:30616"/>
        <dbReference type="ChEBI" id="CHEBI:61560"/>
        <dbReference type="ChEBI" id="CHEBI:73316"/>
        <dbReference type="ChEBI" id="CHEBI:456216"/>
        <dbReference type="EC" id="2.7.4.6"/>
    </reaction>
</comment>
<comment type="catalytic activity">
    <reaction evidence="1">
        <text>a ribonucleoside 5'-diphosphate + ATP = a ribonucleoside 5'-triphosphate + ADP</text>
        <dbReference type="Rhea" id="RHEA:18113"/>
        <dbReference type="ChEBI" id="CHEBI:30616"/>
        <dbReference type="ChEBI" id="CHEBI:57930"/>
        <dbReference type="ChEBI" id="CHEBI:61557"/>
        <dbReference type="ChEBI" id="CHEBI:456216"/>
        <dbReference type="EC" id="2.7.4.6"/>
    </reaction>
</comment>
<comment type="cofactor">
    <cofactor evidence="1">
        <name>Mg(2+)</name>
        <dbReference type="ChEBI" id="CHEBI:18420"/>
    </cofactor>
</comment>
<comment type="subunit">
    <text evidence="1">Homotetramer.</text>
</comment>
<comment type="subcellular location">
    <subcellularLocation>
        <location evidence="1">Cytoplasm</location>
    </subcellularLocation>
</comment>
<comment type="similarity">
    <text evidence="1">Belongs to the NDK family.</text>
</comment>
<comment type="sequence caution" evidence="2">
    <conflict type="erroneous initiation">
        <sequence resource="EMBL-CDS" id="AAU27630"/>
    </conflict>
</comment>
<protein>
    <recommendedName>
        <fullName evidence="1">Nucleoside diphosphate kinase</fullName>
        <shortName evidence="1">NDK</shortName>
        <shortName evidence="1">NDP kinase</shortName>
        <ecNumber evidence="1">2.7.4.6</ecNumber>
    </recommendedName>
    <alternativeName>
        <fullName evidence="1">Nucleoside-2-P kinase</fullName>
    </alternativeName>
</protein>
<reference key="1">
    <citation type="journal article" date="2004" name="Science">
        <title>The genomic sequence of the accidental pathogen Legionella pneumophila.</title>
        <authorList>
            <person name="Chien M."/>
            <person name="Morozova I."/>
            <person name="Shi S."/>
            <person name="Sheng H."/>
            <person name="Chen J."/>
            <person name="Gomez S.M."/>
            <person name="Asamani G."/>
            <person name="Hill K."/>
            <person name="Nuara J."/>
            <person name="Feder M."/>
            <person name="Rineer J."/>
            <person name="Greenberg J.J."/>
            <person name="Steshenko V."/>
            <person name="Park S.H."/>
            <person name="Zhao B."/>
            <person name="Teplitskaya E."/>
            <person name="Edwards J.R."/>
            <person name="Pampou S."/>
            <person name="Georghiou A."/>
            <person name="Chou I.-C."/>
            <person name="Iannuccilli W."/>
            <person name="Ulz M.E."/>
            <person name="Kim D.H."/>
            <person name="Geringer-Sameth A."/>
            <person name="Goldsberry C."/>
            <person name="Morozov P."/>
            <person name="Fischer S.G."/>
            <person name="Segal G."/>
            <person name="Qu X."/>
            <person name="Rzhetsky A."/>
            <person name="Zhang P."/>
            <person name="Cayanis E."/>
            <person name="De Jong P.J."/>
            <person name="Ju J."/>
            <person name="Kalachikov S."/>
            <person name="Shuman H.A."/>
            <person name="Russo J.J."/>
        </authorList>
    </citation>
    <scope>NUCLEOTIDE SEQUENCE [LARGE SCALE GENOMIC DNA]</scope>
    <source>
        <strain>Philadelphia 1 / ATCC 33152 / DSM 7513</strain>
    </source>
</reference>
<proteinExistence type="inferred from homology"/>
<dbReference type="EC" id="2.7.4.6" evidence="1"/>
<dbReference type="EMBL" id="AE017354">
    <property type="protein sequence ID" value="AAU27630.1"/>
    <property type="status" value="ALT_INIT"/>
    <property type="molecule type" value="Genomic_DNA"/>
</dbReference>
<dbReference type="RefSeq" id="WP_015444482.1">
    <property type="nucleotide sequence ID" value="NC_002942.5"/>
</dbReference>
<dbReference type="RefSeq" id="YP_095577.1">
    <property type="nucleotide sequence ID" value="NC_002942.5"/>
</dbReference>
<dbReference type="SMR" id="Q5ZV92"/>
<dbReference type="STRING" id="272624.lpg1548"/>
<dbReference type="PaxDb" id="272624-lpg1548"/>
<dbReference type="GeneID" id="57035537"/>
<dbReference type="KEGG" id="lpn:lpg1548"/>
<dbReference type="PATRIC" id="fig|272624.6.peg.1621"/>
<dbReference type="eggNOG" id="COG0105">
    <property type="taxonomic scope" value="Bacteria"/>
</dbReference>
<dbReference type="HOGENOM" id="CLU_060216_8_1_6"/>
<dbReference type="OrthoDB" id="9801161at2"/>
<dbReference type="Proteomes" id="UP000000609">
    <property type="component" value="Chromosome"/>
</dbReference>
<dbReference type="GO" id="GO:0005737">
    <property type="term" value="C:cytoplasm"/>
    <property type="evidence" value="ECO:0007669"/>
    <property type="project" value="UniProtKB-SubCell"/>
</dbReference>
<dbReference type="GO" id="GO:0005524">
    <property type="term" value="F:ATP binding"/>
    <property type="evidence" value="ECO:0007669"/>
    <property type="project" value="UniProtKB-UniRule"/>
</dbReference>
<dbReference type="GO" id="GO:0046872">
    <property type="term" value="F:metal ion binding"/>
    <property type="evidence" value="ECO:0007669"/>
    <property type="project" value="UniProtKB-KW"/>
</dbReference>
<dbReference type="GO" id="GO:0004550">
    <property type="term" value="F:nucleoside diphosphate kinase activity"/>
    <property type="evidence" value="ECO:0007669"/>
    <property type="project" value="UniProtKB-UniRule"/>
</dbReference>
<dbReference type="GO" id="GO:0006241">
    <property type="term" value="P:CTP biosynthetic process"/>
    <property type="evidence" value="ECO:0007669"/>
    <property type="project" value="UniProtKB-UniRule"/>
</dbReference>
<dbReference type="GO" id="GO:0006183">
    <property type="term" value="P:GTP biosynthetic process"/>
    <property type="evidence" value="ECO:0007669"/>
    <property type="project" value="UniProtKB-UniRule"/>
</dbReference>
<dbReference type="GO" id="GO:0006228">
    <property type="term" value="P:UTP biosynthetic process"/>
    <property type="evidence" value="ECO:0007669"/>
    <property type="project" value="UniProtKB-UniRule"/>
</dbReference>
<dbReference type="CDD" id="cd04413">
    <property type="entry name" value="NDPk_I"/>
    <property type="match status" value="1"/>
</dbReference>
<dbReference type="FunFam" id="3.30.70.141:FF:000001">
    <property type="entry name" value="Nucleoside diphosphate kinase"/>
    <property type="match status" value="1"/>
</dbReference>
<dbReference type="Gene3D" id="3.30.70.141">
    <property type="entry name" value="Nucleoside diphosphate kinase-like domain"/>
    <property type="match status" value="1"/>
</dbReference>
<dbReference type="HAMAP" id="MF_00451">
    <property type="entry name" value="NDP_kinase"/>
    <property type="match status" value="1"/>
</dbReference>
<dbReference type="InterPro" id="IPR034907">
    <property type="entry name" value="NDK-like_dom"/>
</dbReference>
<dbReference type="InterPro" id="IPR036850">
    <property type="entry name" value="NDK-like_dom_sf"/>
</dbReference>
<dbReference type="InterPro" id="IPR001564">
    <property type="entry name" value="Nucleoside_diP_kinase"/>
</dbReference>
<dbReference type="InterPro" id="IPR023005">
    <property type="entry name" value="Nucleoside_diP_kinase_AS"/>
</dbReference>
<dbReference type="NCBIfam" id="NF001908">
    <property type="entry name" value="PRK00668.1"/>
    <property type="match status" value="1"/>
</dbReference>
<dbReference type="PANTHER" id="PTHR46161">
    <property type="entry name" value="NUCLEOSIDE DIPHOSPHATE KINASE"/>
    <property type="match status" value="1"/>
</dbReference>
<dbReference type="PANTHER" id="PTHR46161:SF3">
    <property type="entry name" value="NUCLEOSIDE DIPHOSPHATE KINASE DDB_G0292928-RELATED"/>
    <property type="match status" value="1"/>
</dbReference>
<dbReference type="Pfam" id="PF00334">
    <property type="entry name" value="NDK"/>
    <property type="match status" value="1"/>
</dbReference>
<dbReference type="PRINTS" id="PR01243">
    <property type="entry name" value="NUCDPKINASE"/>
</dbReference>
<dbReference type="SMART" id="SM00562">
    <property type="entry name" value="NDK"/>
    <property type="match status" value="1"/>
</dbReference>
<dbReference type="SUPFAM" id="SSF54919">
    <property type="entry name" value="Nucleoside diphosphate kinase, NDK"/>
    <property type="match status" value="1"/>
</dbReference>
<dbReference type="PROSITE" id="PS00469">
    <property type="entry name" value="NDPK"/>
    <property type="match status" value="1"/>
</dbReference>
<dbReference type="PROSITE" id="PS51374">
    <property type="entry name" value="NDPK_LIKE"/>
    <property type="match status" value="1"/>
</dbReference>
<accession>Q5ZV92</accession>
<keyword id="KW-0067">ATP-binding</keyword>
<keyword id="KW-0963">Cytoplasm</keyword>
<keyword id="KW-0418">Kinase</keyword>
<keyword id="KW-0460">Magnesium</keyword>
<keyword id="KW-0479">Metal-binding</keyword>
<keyword id="KW-0546">Nucleotide metabolism</keyword>
<keyword id="KW-0547">Nucleotide-binding</keyword>
<keyword id="KW-0597">Phosphoprotein</keyword>
<keyword id="KW-1185">Reference proteome</keyword>
<keyword id="KW-0808">Transferase</keyword>
<evidence type="ECO:0000255" key="1">
    <source>
        <dbReference type="HAMAP-Rule" id="MF_00451"/>
    </source>
</evidence>
<evidence type="ECO:0000305" key="2"/>